<dbReference type="EMBL" id="CP000783">
    <property type="protein sequence ID" value="ABU78758.1"/>
    <property type="molecule type" value="Genomic_DNA"/>
</dbReference>
<dbReference type="RefSeq" id="WP_004385045.1">
    <property type="nucleotide sequence ID" value="NC_009778.1"/>
</dbReference>
<dbReference type="SMR" id="A7MIN8"/>
<dbReference type="KEGG" id="esa:ESA_03544"/>
<dbReference type="HOGENOM" id="CLU_105087_3_0_6"/>
<dbReference type="Proteomes" id="UP000000260">
    <property type="component" value="Chromosome"/>
</dbReference>
<dbReference type="Gene3D" id="2.30.110.10">
    <property type="entry name" value="Electron Transport, Fmn-binding Protein, Chain A"/>
    <property type="match status" value="1"/>
</dbReference>
<dbReference type="HAMAP" id="MF_00764">
    <property type="entry name" value="UPF0306"/>
    <property type="match status" value="1"/>
</dbReference>
<dbReference type="InterPro" id="IPR012349">
    <property type="entry name" value="Split_barrel_FMN-bd"/>
</dbReference>
<dbReference type="InterPro" id="IPR011194">
    <property type="entry name" value="UPF0306"/>
</dbReference>
<dbReference type="NCBIfam" id="NF002900">
    <property type="entry name" value="PRK03467.1"/>
    <property type="match status" value="1"/>
</dbReference>
<dbReference type="PIRSF" id="PIRSF009554">
    <property type="entry name" value="UCP009554"/>
    <property type="match status" value="1"/>
</dbReference>
<dbReference type="SUPFAM" id="SSF50475">
    <property type="entry name" value="FMN-binding split barrel"/>
    <property type="match status" value="1"/>
</dbReference>
<sequence length="144" mass="16354">MDALDAISKWLAKQHVVTYCVGNGEALWCANAFYLYDRERVAFYLLSDTESRHGKMAGKLAPVAGTVNGQTKTVALIRGVQFSGELRLVEEPESEALRERYNRRFPVARVMSSPLWEIRLDEIKFTDNTLGFGKKLVWLRAEQA</sequence>
<organism>
    <name type="scientific">Cronobacter sakazakii (strain ATCC BAA-894)</name>
    <name type="common">Enterobacter sakazakii</name>
    <dbReference type="NCBI Taxonomy" id="290339"/>
    <lineage>
        <taxon>Bacteria</taxon>
        <taxon>Pseudomonadati</taxon>
        <taxon>Pseudomonadota</taxon>
        <taxon>Gammaproteobacteria</taxon>
        <taxon>Enterobacterales</taxon>
        <taxon>Enterobacteriaceae</taxon>
        <taxon>Cronobacter</taxon>
    </lineage>
</organism>
<name>Y3544_CROS8</name>
<evidence type="ECO:0000255" key="1">
    <source>
        <dbReference type="HAMAP-Rule" id="MF_00764"/>
    </source>
</evidence>
<proteinExistence type="inferred from homology"/>
<comment type="similarity">
    <text evidence="1">Belongs to the UPF0306 family.</text>
</comment>
<accession>A7MIN8</accession>
<protein>
    <recommendedName>
        <fullName evidence="1">UPF0306 protein ESA_03544</fullName>
    </recommendedName>
</protein>
<feature type="chain" id="PRO_1000046779" description="UPF0306 protein ESA_03544">
    <location>
        <begin position="1"/>
        <end position="144"/>
    </location>
</feature>
<keyword id="KW-1185">Reference proteome</keyword>
<reference key="1">
    <citation type="journal article" date="2010" name="PLoS ONE">
        <title>Genome sequence of Cronobacter sakazakii BAA-894 and comparative genomic hybridization analysis with other Cronobacter species.</title>
        <authorList>
            <person name="Kucerova E."/>
            <person name="Clifton S.W."/>
            <person name="Xia X.Q."/>
            <person name="Long F."/>
            <person name="Porwollik S."/>
            <person name="Fulton L."/>
            <person name="Fronick C."/>
            <person name="Minx P."/>
            <person name="Kyung K."/>
            <person name="Warren W."/>
            <person name="Fulton R."/>
            <person name="Feng D."/>
            <person name="Wollam A."/>
            <person name="Shah N."/>
            <person name="Bhonagiri V."/>
            <person name="Nash W.E."/>
            <person name="Hallsworth-Pepin K."/>
            <person name="Wilson R.K."/>
            <person name="McClelland M."/>
            <person name="Forsythe S.J."/>
        </authorList>
    </citation>
    <scope>NUCLEOTIDE SEQUENCE [LARGE SCALE GENOMIC DNA]</scope>
    <source>
        <strain>ATCC BAA-894</strain>
    </source>
</reference>
<gene>
    <name type="ordered locus">ESA_03544</name>
</gene>